<sequence>MEIGSAGPVGAQPLLMVPRRPGYGTMGKPTKLLANCFQVEIPKIDVYLYEVDIKPDKCPRRVNREVVDSMVQHFKVTIFGDRRPVYDGKRSLYTANPLPVATTGVDLDATLPGEGGKDRPFKVSIKFVSRVSWHLLHEVLTGRTLPEPLELDKPISTNPVHAVDVVLRHLPSMKYTPVGRSFFSAPEGYDHPLGGGREVWFGFHQSVRPAMWKMMLNIDVSATAFYKAQPVIQFMCEVLDIHNIDEQPRPLTDSHRVKSTKEIKGLKVEVTHCGTMRRKYRVCNVTRRPASHQTFPLQLENGQTVERTVAQYFREKYTLQLKYPHLPCLQVGQEQKHTYLPLEVCNIVAGQRCIKKLTDNQTSTMIKATARSAPDRQEEISRLVRSANYETDPFVQEFQFKVRDEMAHVTGRVLPAPMLQYGGRNRTVATPSHGVWDMRGKQFHTGVEIEMWAIACFATQRQCREEILKGFTDQLRKISKDAGMPIQGQPCFCKYAQGADSVEPMFRHLKNTYSGLQLIIVILPGKTPVYAEVKRVGDTLLGMATQCVQVKNVIKTSPQTLSNLCLKINVKLGGINNILVPHQRPSVFQQPVIFLGADVTHPPAGDGKKPSIAAVVGSMDAHPSRYCATVRVQRPRQEIIQDLASMVRELLIQFYKSTRFKPTRIIFYRDGVSEGQFRQVLYYELLAIREACISLEKDYQPGITYIVVQKRHHTRLFCADRTERVGRSGNIPAGTTVDTDITHPYEFDFYLCSHAGIQGTSRPSHYHVLWDDNCFTADELQLLTYQPSAHTYVHCTRSVSIPAPAYYAHLVAFRARYHLVDKERDSAEGSHVSGQSNGRDPQALAKAAQIHQDTLRTMYFA</sequence>
<proteinExistence type="evidence at transcript level"/>
<name>AGO3_BOVIN</name>
<feature type="chain" id="PRO_0000371222" description="Protein argonaute-3">
    <location>
        <begin position="1"/>
        <end position="861"/>
    </location>
</feature>
<feature type="domain" description="PAZ" evidence="4">
    <location>
        <begin position="230"/>
        <end position="349"/>
    </location>
</feature>
<feature type="domain" description="Piwi" evidence="3">
    <location>
        <begin position="518"/>
        <end position="820"/>
    </location>
</feature>
<feature type="region of interest" description="Interaction with guide RNA" evidence="1">
    <location>
        <begin position="530"/>
        <end position="567"/>
    </location>
</feature>
<feature type="region of interest" description="Interaction with guide RNA" evidence="1">
    <location>
        <begin position="758"/>
        <end position="806"/>
    </location>
</feature>
<feature type="region of interest" description="Disordered" evidence="5">
    <location>
        <begin position="824"/>
        <end position="847"/>
    </location>
</feature>
<feature type="binding site" evidence="1">
    <location>
        <position position="598"/>
    </location>
    <ligand>
        <name>a divalent metal cation</name>
        <dbReference type="ChEBI" id="CHEBI:60240"/>
    </ligand>
</feature>
<feature type="binding site" evidence="1">
    <location>
        <position position="638"/>
    </location>
    <ligand>
        <name>a divalent metal cation</name>
        <dbReference type="ChEBI" id="CHEBI:60240"/>
    </ligand>
</feature>
<feature type="binding site" evidence="1">
    <location>
        <position position="670"/>
    </location>
    <ligand>
        <name>a divalent metal cation</name>
        <dbReference type="ChEBI" id="CHEBI:60240"/>
    </ligand>
</feature>
<feature type="binding site" evidence="1">
    <location>
        <position position="809"/>
    </location>
    <ligand>
        <name>a divalent metal cation</name>
        <dbReference type="ChEBI" id="CHEBI:60240"/>
    </ligand>
</feature>
<feature type="modified residue" description="N-acetylmethionine" evidence="1">
    <location>
        <position position="1"/>
    </location>
</feature>
<feature type="modified residue" description="Phosphoserine" evidence="1">
    <location>
        <position position="826"/>
    </location>
</feature>
<evidence type="ECO:0000250" key="1">
    <source>
        <dbReference type="UniProtKB" id="Q9H9G7"/>
    </source>
</evidence>
<evidence type="ECO:0000250" key="2">
    <source>
        <dbReference type="UniProtKB" id="Q9UKV8"/>
    </source>
</evidence>
<evidence type="ECO:0000255" key="3">
    <source>
        <dbReference type="HAMAP-Rule" id="MF_03032"/>
    </source>
</evidence>
<evidence type="ECO:0000255" key="4">
    <source>
        <dbReference type="PROSITE-ProRule" id="PRU00142"/>
    </source>
</evidence>
<evidence type="ECO:0000256" key="5">
    <source>
        <dbReference type="SAM" id="MobiDB-lite"/>
    </source>
</evidence>
<evidence type="ECO:0000305" key="6"/>
<dbReference type="EC" id="3.1.26.n2" evidence="1"/>
<dbReference type="EMBL" id="AY436348">
    <property type="protein sequence ID" value="AAR12162.2"/>
    <property type="status" value="ALT_INIT"/>
    <property type="molecule type" value="mRNA"/>
</dbReference>
<dbReference type="SMR" id="Q6T5B7"/>
<dbReference type="FunCoup" id="Q6T5B7">
    <property type="interactions" value="907"/>
</dbReference>
<dbReference type="STRING" id="9913.ENSBTAP00000063841"/>
<dbReference type="PaxDb" id="9913-ENSBTAP00000024385"/>
<dbReference type="eggNOG" id="KOG1041">
    <property type="taxonomic scope" value="Eukaryota"/>
</dbReference>
<dbReference type="InParanoid" id="Q6T5B7"/>
<dbReference type="OrthoDB" id="10252740at2759"/>
<dbReference type="Proteomes" id="UP000009136">
    <property type="component" value="Unplaced"/>
</dbReference>
<dbReference type="GO" id="GO:0005737">
    <property type="term" value="C:cytoplasm"/>
    <property type="evidence" value="ECO:0000318"/>
    <property type="project" value="GO_Central"/>
</dbReference>
<dbReference type="GO" id="GO:0036464">
    <property type="term" value="C:cytoplasmic ribonucleoprotein granule"/>
    <property type="evidence" value="ECO:0000318"/>
    <property type="project" value="GO_Central"/>
</dbReference>
<dbReference type="GO" id="GO:0005634">
    <property type="term" value="C:nucleus"/>
    <property type="evidence" value="ECO:0000318"/>
    <property type="project" value="GO_Central"/>
</dbReference>
<dbReference type="GO" id="GO:0000932">
    <property type="term" value="C:P-body"/>
    <property type="evidence" value="ECO:0007669"/>
    <property type="project" value="UniProtKB-SubCell"/>
</dbReference>
<dbReference type="GO" id="GO:0016442">
    <property type="term" value="C:RISC complex"/>
    <property type="evidence" value="ECO:0000318"/>
    <property type="project" value="GO_Central"/>
</dbReference>
<dbReference type="GO" id="GO:0090624">
    <property type="term" value="F:endoribonuclease activity, cleaving miRNA-paired mRNA"/>
    <property type="evidence" value="ECO:0000250"/>
    <property type="project" value="UniProtKB"/>
</dbReference>
<dbReference type="GO" id="GO:0046872">
    <property type="term" value="F:metal ion binding"/>
    <property type="evidence" value="ECO:0007669"/>
    <property type="project" value="UniProtKB-KW"/>
</dbReference>
<dbReference type="GO" id="GO:0035198">
    <property type="term" value="F:miRNA binding"/>
    <property type="evidence" value="ECO:0000318"/>
    <property type="project" value="GO_Central"/>
</dbReference>
<dbReference type="GO" id="GO:0004521">
    <property type="term" value="F:RNA endonuclease activity"/>
    <property type="evidence" value="ECO:0000250"/>
    <property type="project" value="UniProtKB"/>
</dbReference>
<dbReference type="GO" id="GO:0003727">
    <property type="term" value="F:single-stranded RNA binding"/>
    <property type="evidence" value="ECO:0000318"/>
    <property type="project" value="GO_Central"/>
</dbReference>
<dbReference type="GO" id="GO:0035278">
    <property type="term" value="P:miRNA-mediated gene silencing by inhibition of translation"/>
    <property type="evidence" value="ECO:0000250"/>
    <property type="project" value="UniProtKB"/>
</dbReference>
<dbReference type="GO" id="GO:0006402">
    <property type="term" value="P:mRNA catabolic process"/>
    <property type="evidence" value="ECO:0000250"/>
    <property type="project" value="UniProtKB"/>
</dbReference>
<dbReference type="GO" id="GO:0031054">
    <property type="term" value="P:pre-miRNA processing"/>
    <property type="evidence" value="ECO:0000318"/>
    <property type="project" value="GO_Central"/>
</dbReference>
<dbReference type="GO" id="GO:0072091">
    <property type="term" value="P:regulation of stem cell proliferation"/>
    <property type="evidence" value="ECO:0007669"/>
    <property type="project" value="InterPro"/>
</dbReference>
<dbReference type="GO" id="GO:0035194">
    <property type="term" value="P:regulatory ncRNA-mediated post-transcriptional gene silencing"/>
    <property type="evidence" value="ECO:0000318"/>
    <property type="project" value="GO_Central"/>
</dbReference>
<dbReference type="CDD" id="cd02846">
    <property type="entry name" value="PAZ_argonaute_like"/>
    <property type="match status" value="1"/>
</dbReference>
<dbReference type="CDD" id="cd04657">
    <property type="entry name" value="Piwi_ago-like"/>
    <property type="match status" value="1"/>
</dbReference>
<dbReference type="FunFam" id="2.170.260.10:FF:000001">
    <property type="entry name" value="Protein argonaute-2"/>
    <property type="match status" value="1"/>
</dbReference>
<dbReference type="FunFam" id="3.30.420.10:FF:000001">
    <property type="entry name" value="Protein argonaute-2"/>
    <property type="match status" value="1"/>
</dbReference>
<dbReference type="FunFam" id="3.40.50.2300:FF:000005">
    <property type="entry name" value="Protein argonaute-2"/>
    <property type="match status" value="1"/>
</dbReference>
<dbReference type="Gene3D" id="3.40.50.2300">
    <property type="match status" value="1"/>
</dbReference>
<dbReference type="Gene3D" id="2.170.260.10">
    <property type="entry name" value="paz domain"/>
    <property type="match status" value="1"/>
</dbReference>
<dbReference type="Gene3D" id="3.30.420.10">
    <property type="entry name" value="Ribonuclease H-like superfamily/Ribonuclease H"/>
    <property type="match status" value="1"/>
</dbReference>
<dbReference type="HAMAP" id="MF_03032">
    <property type="entry name" value="AGO3"/>
    <property type="match status" value="1"/>
</dbReference>
<dbReference type="InterPro" id="IPR028603">
    <property type="entry name" value="AGO3"/>
</dbReference>
<dbReference type="InterPro" id="IPR014811">
    <property type="entry name" value="ArgoL1"/>
</dbReference>
<dbReference type="InterPro" id="IPR032472">
    <property type="entry name" value="ArgoL2"/>
</dbReference>
<dbReference type="InterPro" id="IPR032473">
    <property type="entry name" value="Argonaute_Mid_dom"/>
</dbReference>
<dbReference type="InterPro" id="IPR032474">
    <property type="entry name" value="Argonaute_N"/>
</dbReference>
<dbReference type="InterPro" id="IPR003100">
    <property type="entry name" value="PAZ_dom"/>
</dbReference>
<dbReference type="InterPro" id="IPR036085">
    <property type="entry name" value="PAZ_dom_sf"/>
</dbReference>
<dbReference type="InterPro" id="IPR003165">
    <property type="entry name" value="Piwi"/>
</dbReference>
<dbReference type="InterPro" id="IPR045246">
    <property type="entry name" value="Piwi_ago-like"/>
</dbReference>
<dbReference type="InterPro" id="IPR012337">
    <property type="entry name" value="RNaseH-like_sf"/>
</dbReference>
<dbReference type="InterPro" id="IPR036397">
    <property type="entry name" value="RNaseH_sf"/>
</dbReference>
<dbReference type="PANTHER" id="PTHR22891">
    <property type="entry name" value="EUKARYOTIC TRANSLATION INITIATION FACTOR 2C"/>
    <property type="match status" value="1"/>
</dbReference>
<dbReference type="Pfam" id="PF08699">
    <property type="entry name" value="ArgoL1"/>
    <property type="match status" value="1"/>
</dbReference>
<dbReference type="Pfam" id="PF16488">
    <property type="entry name" value="ArgoL2"/>
    <property type="match status" value="1"/>
</dbReference>
<dbReference type="Pfam" id="PF16487">
    <property type="entry name" value="ArgoMid"/>
    <property type="match status" value="1"/>
</dbReference>
<dbReference type="Pfam" id="PF16486">
    <property type="entry name" value="ArgoN"/>
    <property type="match status" value="1"/>
</dbReference>
<dbReference type="Pfam" id="PF02170">
    <property type="entry name" value="PAZ"/>
    <property type="match status" value="1"/>
</dbReference>
<dbReference type="Pfam" id="PF02171">
    <property type="entry name" value="Piwi"/>
    <property type="match status" value="1"/>
</dbReference>
<dbReference type="SMART" id="SM01163">
    <property type="entry name" value="DUF1785"/>
    <property type="match status" value="1"/>
</dbReference>
<dbReference type="SMART" id="SM00949">
    <property type="entry name" value="PAZ"/>
    <property type="match status" value="1"/>
</dbReference>
<dbReference type="SMART" id="SM00950">
    <property type="entry name" value="Piwi"/>
    <property type="match status" value="1"/>
</dbReference>
<dbReference type="SUPFAM" id="SSF101690">
    <property type="entry name" value="PAZ domain"/>
    <property type="match status" value="1"/>
</dbReference>
<dbReference type="SUPFAM" id="SSF53098">
    <property type="entry name" value="Ribonuclease H-like"/>
    <property type="match status" value="1"/>
</dbReference>
<dbReference type="PROSITE" id="PS50821">
    <property type="entry name" value="PAZ"/>
    <property type="match status" value="1"/>
</dbReference>
<dbReference type="PROSITE" id="PS50822">
    <property type="entry name" value="PIWI"/>
    <property type="match status" value="1"/>
</dbReference>
<organism>
    <name type="scientific">Bos taurus</name>
    <name type="common">Bovine</name>
    <dbReference type="NCBI Taxonomy" id="9913"/>
    <lineage>
        <taxon>Eukaryota</taxon>
        <taxon>Metazoa</taxon>
        <taxon>Chordata</taxon>
        <taxon>Craniata</taxon>
        <taxon>Vertebrata</taxon>
        <taxon>Euteleostomi</taxon>
        <taxon>Mammalia</taxon>
        <taxon>Eutheria</taxon>
        <taxon>Laurasiatheria</taxon>
        <taxon>Artiodactyla</taxon>
        <taxon>Ruminantia</taxon>
        <taxon>Pecora</taxon>
        <taxon>Bovidae</taxon>
        <taxon>Bovinae</taxon>
        <taxon>Bos</taxon>
    </lineage>
</organism>
<comment type="function">
    <text evidence="3">Required for RNA-mediated gene silencing (RNAi). Binds to short RNAs such as microRNAs (miRNAs) and represses the translation of mRNAs which are complementary to them. Proposed to be involved in stabilization of small RNA derivates (siRNA) derived from processed RNA polymerase III-transcribed Alu repeats containing a DR2 retinoic acid response element (RARE) in stem cells and in the subsequent siRNA-dependent degradation of a subset of RNA polymerase II-transcribed coding mRNAs by recruiting a mRNA decapping complex involving EDC4. Possesses RNA slicer activity but only on select RNAs bearing 5'- and 3'-flanking sequences to the region of guide-target complementarity (By similarity).</text>
</comment>
<comment type="catalytic activity">
    <reaction evidence="1">
        <text>Endonucleolytic cleavage to 5'-phosphomonoester.</text>
        <dbReference type="EC" id="3.1.26.n2"/>
    </reaction>
</comment>
<comment type="subunit">
    <text evidence="3">Interacts with EIF4B, IMP8, PRMT5 and TNRC6B (By similarity). Interacts with APOBEC3F, APOBEC3G and APOBEC3H. Interacts with EDC4 (By similarity).</text>
</comment>
<comment type="subcellular location">
    <subcellularLocation>
        <location evidence="3">Cytoplasm</location>
        <location evidence="3">P-body</location>
    </subcellularLocation>
</comment>
<comment type="PTM">
    <text evidence="2">Ubiquitinated on surface-exposed lysines by a SCF-like E3 ubiquitin-protein ligase complex containing ZSWIM8 during target-directed microRNA degradation (TDMD), a process that mediates degradation of microRNAs (miRNAs). Ubiquitination by the SCF-like E3 ubiquitin-protein ligase complex containing ZSWIM8 leads to its subsequent degradation, thereby exposing miRNAs for degradation. ZSWIM8 recognizes and binds AGO3 when it is engaged with a TDMD target.</text>
</comment>
<comment type="similarity">
    <text evidence="3">Belongs to the argonaute family. Ago subfamily.</text>
</comment>
<comment type="sequence caution" evidence="6">
    <conflict type="erroneous initiation">
        <sequence resource="EMBL-CDS" id="AAR12162"/>
    </conflict>
</comment>
<accession>Q6T5B7</accession>
<protein>
    <recommendedName>
        <fullName evidence="3">Protein argonaute-3</fullName>
        <shortName evidence="3">Argonaute3</shortName>
        <ecNumber evidence="1">3.1.26.n2</ecNumber>
    </recommendedName>
    <alternativeName>
        <fullName>Argonaute RISC catalytic component 3</fullName>
    </alternativeName>
    <alternativeName>
        <fullName evidence="3">Eukaryotic translation initiation factor 2C 3</fullName>
        <shortName evidence="3">eIF-2C 3</shortName>
        <shortName evidence="3">eIF2C 3</shortName>
    </alternativeName>
</protein>
<gene>
    <name type="primary">AGO3</name>
    <name type="synonym">EIF2C3</name>
</gene>
<keyword id="KW-0007">Acetylation</keyword>
<keyword id="KW-0963">Cytoplasm</keyword>
<keyword id="KW-0255">Endonuclease</keyword>
<keyword id="KW-0378">Hydrolase</keyword>
<keyword id="KW-0479">Metal-binding</keyword>
<keyword id="KW-0540">Nuclease</keyword>
<keyword id="KW-0597">Phosphoprotein</keyword>
<keyword id="KW-1185">Reference proteome</keyword>
<keyword id="KW-0687">Ribonucleoprotein</keyword>
<keyword id="KW-0694">RNA-binding</keyword>
<keyword id="KW-0943">RNA-mediated gene silencing</keyword>
<keyword id="KW-0810">Translation regulation</keyword>
<keyword id="KW-0832">Ubl conjugation</keyword>
<reference key="1">
    <citation type="submission" date="2003-10" db="EMBL/GenBank/DDBJ databases">
        <title>Bovine epigenetics.</title>
        <authorList>
            <person name="Golding M.C."/>
            <person name="Westhusin M.E."/>
        </authorList>
    </citation>
    <scope>NUCLEOTIDE SEQUENCE [MRNA]</scope>
</reference>
<reference key="2">
    <citation type="submission" date="2004-04" db="EMBL/GenBank/DDBJ databases">
        <authorList>
            <person name="Golding M.C."/>
            <person name="Long C.R."/>
            <person name="Westhusin M.E."/>
        </authorList>
    </citation>
    <scope>SEQUENCE REVISION</scope>
</reference>